<accession>Q1GNM2</accession>
<feature type="chain" id="PRO_1000044777" description="Uronate isomerase">
    <location>
        <begin position="1"/>
        <end position="470"/>
    </location>
</feature>
<evidence type="ECO:0000255" key="1">
    <source>
        <dbReference type="HAMAP-Rule" id="MF_00675"/>
    </source>
</evidence>
<dbReference type="EC" id="5.3.1.12" evidence="1"/>
<dbReference type="EMBL" id="CP000356">
    <property type="protein sequence ID" value="ABF54750.1"/>
    <property type="molecule type" value="Genomic_DNA"/>
</dbReference>
<dbReference type="RefSeq" id="WP_011543313.1">
    <property type="nucleotide sequence ID" value="NC_008048.1"/>
</dbReference>
<dbReference type="SMR" id="Q1GNM2"/>
<dbReference type="STRING" id="317655.Sala_3046"/>
<dbReference type="KEGG" id="sal:Sala_3046"/>
<dbReference type="eggNOG" id="COG1904">
    <property type="taxonomic scope" value="Bacteria"/>
</dbReference>
<dbReference type="HOGENOM" id="CLU_044465_0_0_5"/>
<dbReference type="OrthoDB" id="9766564at2"/>
<dbReference type="UniPathway" id="UPA00246"/>
<dbReference type="Proteomes" id="UP000006578">
    <property type="component" value="Chromosome"/>
</dbReference>
<dbReference type="GO" id="GO:0008880">
    <property type="term" value="F:glucuronate isomerase activity"/>
    <property type="evidence" value="ECO:0007669"/>
    <property type="project" value="UniProtKB-UniRule"/>
</dbReference>
<dbReference type="GO" id="GO:0019698">
    <property type="term" value="P:D-galacturonate catabolic process"/>
    <property type="evidence" value="ECO:0007669"/>
    <property type="project" value="TreeGrafter"/>
</dbReference>
<dbReference type="GO" id="GO:0042840">
    <property type="term" value="P:D-glucuronate catabolic process"/>
    <property type="evidence" value="ECO:0007669"/>
    <property type="project" value="TreeGrafter"/>
</dbReference>
<dbReference type="Gene3D" id="3.20.20.140">
    <property type="entry name" value="Metal-dependent hydrolases"/>
    <property type="match status" value="1"/>
</dbReference>
<dbReference type="Gene3D" id="1.10.2020.10">
    <property type="entry name" value="uronate isomerase, domain 2, chain A"/>
    <property type="match status" value="1"/>
</dbReference>
<dbReference type="HAMAP" id="MF_00675">
    <property type="entry name" value="UxaC"/>
    <property type="match status" value="1"/>
</dbReference>
<dbReference type="InterPro" id="IPR032466">
    <property type="entry name" value="Metal_Hydrolase"/>
</dbReference>
<dbReference type="InterPro" id="IPR003766">
    <property type="entry name" value="Uronate_isomerase"/>
</dbReference>
<dbReference type="NCBIfam" id="NF002794">
    <property type="entry name" value="PRK02925.1"/>
    <property type="match status" value="1"/>
</dbReference>
<dbReference type="PANTHER" id="PTHR30068">
    <property type="entry name" value="URONATE ISOMERASE"/>
    <property type="match status" value="1"/>
</dbReference>
<dbReference type="PANTHER" id="PTHR30068:SF4">
    <property type="entry name" value="URONATE ISOMERASE"/>
    <property type="match status" value="1"/>
</dbReference>
<dbReference type="Pfam" id="PF02614">
    <property type="entry name" value="UxaC"/>
    <property type="match status" value="1"/>
</dbReference>
<dbReference type="SUPFAM" id="SSF51556">
    <property type="entry name" value="Metallo-dependent hydrolases"/>
    <property type="match status" value="1"/>
</dbReference>
<protein>
    <recommendedName>
        <fullName evidence="1">Uronate isomerase</fullName>
        <ecNumber evidence="1">5.3.1.12</ecNumber>
    </recommendedName>
    <alternativeName>
        <fullName evidence="1">Glucuronate isomerase</fullName>
    </alternativeName>
    <alternativeName>
        <fullName evidence="1">Uronic isomerase</fullName>
    </alternativeName>
</protein>
<proteinExistence type="inferred from homology"/>
<comment type="catalytic activity">
    <reaction evidence="1">
        <text>D-glucuronate = D-fructuronate</text>
        <dbReference type="Rhea" id="RHEA:13049"/>
        <dbReference type="ChEBI" id="CHEBI:58720"/>
        <dbReference type="ChEBI" id="CHEBI:59863"/>
        <dbReference type="EC" id="5.3.1.12"/>
    </reaction>
</comment>
<comment type="catalytic activity">
    <reaction evidence="1">
        <text>aldehydo-D-galacturonate = keto-D-tagaturonate</text>
        <dbReference type="Rhea" id="RHEA:27702"/>
        <dbReference type="ChEBI" id="CHEBI:12952"/>
        <dbReference type="ChEBI" id="CHEBI:17886"/>
        <dbReference type="EC" id="5.3.1.12"/>
    </reaction>
</comment>
<comment type="pathway">
    <text evidence="1">Carbohydrate metabolism; pentose and glucuronate interconversion.</text>
</comment>
<comment type="similarity">
    <text evidence="1">Belongs to the metallo-dependent hydrolases superfamily. Uronate isomerase family.</text>
</comment>
<name>UXAC_SPHAL</name>
<gene>
    <name evidence="1" type="primary">uxaC</name>
    <name type="ordered locus">Sala_3046</name>
</gene>
<organism>
    <name type="scientific">Sphingopyxis alaskensis (strain DSM 13593 / LMG 18877 / RB2256)</name>
    <name type="common">Sphingomonas alaskensis</name>
    <dbReference type="NCBI Taxonomy" id="317655"/>
    <lineage>
        <taxon>Bacteria</taxon>
        <taxon>Pseudomonadati</taxon>
        <taxon>Pseudomonadota</taxon>
        <taxon>Alphaproteobacteria</taxon>
        <taxon>Sphingomonadales</taxon>
        <taxon>Sphingomonadaceae</taxon>
        <taxon>Sphingopyxis</taxon>
    </lineage>
</organism>
<sequence>MPRPLYLSPDRLFPSDPAQRDIARRLYKAVAGLPIVSPHGHTDPAWFAGDAPFGNAAELLLHPDHYVFRMLYSQGVSLDALGIGNADADPRESWRLFAENYHLFRATPSRMWMDWVFAEVFGFDVQLSAETSDLYYDRITEALAIDAFRPRALFDRFGIEVIATTESPLDSLDHHAVIRAANASGEWGGRVITAYRPDPVVDPEFEGFRDNLARFSNLSGEDAFSYSGYLAAHRKRRAFFASMGATSTDHGHPSAATADLSETQAEALFARVTGEDMSAADAELFRAHMLTVMAGMSLDDGLVMQIHPGAFRNHNPWLFANHGRDKGADIPTATDYVHALRPLLGRYGNEADLTIILFTLDETSYARELAPLAGHYPALKLGPAWWFHDSPEGMRRFRSQMTETAGFYNTVGFNDDTRAFLSIPARHDVARRIDCGFLAQLVSEHRLEEWEAAELAADLSYNLAKASYKL</sequence>
<reference key="1">
    <citation type="journal article" date="2009" name="Proc. Natl. Acad. Sci. U.S.A.">
        <title>The genomic basis of trophic strategy in marine bacteria.</title>
        <authorList>
            <person name="Lauro F.M."/>
            <person name="McDougald D."/>
            <person name="Thomas T."/>
            <person name="Williams T.J."/>
            <person name="Egan S."/>
            <person name="Rice S."/>
            <person name="DeMaere M.Z."/>
            <person name="Ting L."/>
            <person name="Ertan H."/>
            <person name="Johnson J."/>
            <person name="Ferriera S."/>
            <person name="Lapidus A."/>
            <person name="Anderson I."/>
            <person name="Kyrpides N."/>
            <person name="Munk A.C."/>
            <person name="Detter C."/>
            <person name="Han C.S."/>
            <person name="Brown M.V."/>
            <person name="Robb F.T."/>
            <person name="Kjelleberg S."/>
            <person name="Cavicchioli R."/>
        </authorList>
    </citation>
    <scope>NUCLEOTIDE SEQUENCE [LARGE SCALE GENOMIC DNA]</scope>
    <source>
        <strain>DSM 13593 / LMG 18877 / RB2256</strain>
    </source>
</reference>
<keyword id="KW-0413">Isomerase</keyword>
<keyword id="KW-1185">Reference proteome</keyword>